<comment type="function">
    <text evidence="1">Methylates ribosomal protein L11.</text>
</comment>
<comment type="catalytic activity">
    <reaction evidence="1">
        <text>L-lysyl-[protein] + 3 S-adenosyl-L-methionine = N(6),N(6),N(6)-trimethyl-L-lysyl-[protein] + 3 S-adenosyl-L-homocysteine + 3 H(+)</text>
        <dbReference type="Rhea" id="RHEA:54192"/>
        <dbReference type="Rhea" id="RHEA-COMP:9752"/>
        <dbReference type="Rhea" id="RHEA-COMP:13826"/>
        <dbReference type="ChEBI" id="CHEBI:15378"/>
        <dbReference type="ChEBI" id="CHEBI:29969"/>
        <dbReference type="ChEBI" id="CHEBI:57856"/>
        <dbReference type="ChEBI" id="CHEBI:59789"/>
        <dbReference type="ChEBI" id="CHEBI:61961"/>
    </reaction>
</comment>
<comment type="subcellular location">
    <subcellularLocation>
        <location evidence="1">Cytoplasm</location>
    </subcellularLocation>
</comment>
<comment type="similarity">
    <text evidence="1">Belongs to the methyltransferase superfamily. PrmA family.</text>
</comment>
<proteinExistence type="inferred from homology"/>
<protein>
    <recommendedName>
        <fullName evidence="1">Ribosomal protein L11 methyltransferase</fullName>
        <shortName evidence="1">L11 Mtase</shortName>
        <ecNumber evidence="1">2.1.1.-</ecNumber>
    </recommendedName>
</protein>
<name>PRMA_MOOTA</name>
<dbReference type="EC" id="2.1.1.-" evidence="1"/>
<dbReference type="EMBL" id="CP000232">
    <property type="protein sequence ID" value="ABC18903.1"/>
    <property type="molecule type" value="Genomic_DNA"/>
</dbReference>
<dbReference type="RefSeq" id="YP_429446.1">
    <property type="nucleotide sequence ID" value="NC_007644.1"/>
</dbReference>
<dbReference type="SMR" id="Q2RKY6"/>
<dbReference type="STRING" id="264732.Moth_0573"/>
<dbReference type="EnsemblBacteria" id="ABC18903">
    <property type="protein sequence ID" value="ABC18903"/>
    <property type="gene ID" value="Moth_0573"/>
</dbReference>
<dbReference type="KEGG" id="mta:Moth_0573"/>
<dbReference type="PATRIC" id="fig|264732.11.peg.616"/>
<dbReference type="eggNOG" id="COG2264">
    <property type="taxonomic scope" value="Bacteria"/>
</dbReference>
<dbReference type="HOGENOM" id="CLU_049382_0_1_9"/>
<dbReference type="OrthoDB" id="9785995at2"/>
<dbReference type="GO" id="GO:0005737">
    <property type="term" value="C:cytoplasm"/>
    <property type="evidence" value="ECO:0007669"/>
    <property type="project" value="UniProtKB-SubCell"/>
</dbReference>
<dbReference type="GO" id="GO:0016279">
    <property type="term" value="F:protein-lysine N-methyltransferase activity"/>
    <property type="evidence" value="ECO:0007669"/>
    <property type="project" value="RHEA"/>
</dbReference>
<dbReference type="GO" id="GO:0032259">
    <property type="term" value="P:methylation"/>
    <property type="evidence" value="ECO:0007669"/>
    <property type="project" value="UniProtKB-KW"/>
</dbReference>
<dbReference type="CDD" id="cd02440">
    <property type="entry name" value="AdoMet_MTases"/>
    <property type="match status" value="1"/>
</dbReference>
<dbReference type="Gene3D" id="3.40.50.150">
    <property type="entry name" value="Vaccinia Virus protein VP39"/>
    <property type="match status" value="1"/>
</dbReference>
<dbReference type="HAMAP" id="MF_00735">
    <property type="entry name" value="Methyltr_PrmA"/>
    <property type="match status" value="1"/>
</dbReference>
<dbReference type="InterPro" id="IPR050078">
    <property type="entry name" value="Ribosomal_L11_MeTrfase_PrmA"/>
</dbReference>
<dbReference type="InterPro" id="IPR004498">
    <property type="entry name" value="Ribosomal_PrmA_MeTrfase"/>
</dbReference>
<dbReference type="InterPro" id="IPR029063">
    <property type="entry name" value="SAM-dependent_MTases_sf"/>
</dbReference>
<dbReference type="NCBIfam" id="TIGR00406">
    <property type="entry name" value="prmA"/>
    <property type="match status" value="1"/>
</dbReference>
<dbReference type="PANTHER" id="PTHR43648">
    <property type="entry name" value="ELECTRON TRANSFER FLAVOPROTEIN BETA SUBUNIT LYSINE METHYLTRANSFERASE"/>
    <property type="match status" value="1"/>
</dbReference>
<dbReference type="PANTHER" id="PTHR43648:SF1">
    <property type="entry name" value="ELECTRON TRANSFER FLAVOPROTEIN BETA SUBUNIT LYSINE METHYLTRANSFERASE"/>
    <property type="match status" value="1"/>
</dbReference>
<dbReference type="Pfam" id="PF06325">
    <property type="entry name" value="PrmA"/>
    <property type="match status" value="1"/>
</dbReference>
<dbReference type="PIRSF" id="PIRSF000401">
    <property type="entry name" value="RPL11_MTase"/>
    <property type="match status" value="1"/>
</dbReference>
<dbReference type="SUPFAM" id="SSF53335">
    <property type="entry name" value="S-adenosyl-L-methionine-dependent methyltransferases"/>
    <property type="match status" value="1"/>
</dbReference>
<keyword id="KW-0963">Cytoplasm</keyword>
<keyword id="KW-0489">Methyltransferase</keyword>
<keyword id="KW-0949">S-adenosyl-L-methionine</keyword>
<keyword id="KW-0808">Transferase</keyword>
<reference key="1">
    <citation type="journal article" date="2008" name="Environ. Microbiol.">
        <title>The complete genome sequence of Moorella thermoacetica (f. Clostridium thermoaceticum).</title>
        <authorList>
            <person name="Pierce E."/>
            <person name="Xie G."/>
            <person name="Barabote R.D."/>
            <person name="Saunders E."/>
            <person name="Han C.S."/>
            <person name="Detter J.C."/>
            <person name="Richardson P."/>
            <person name="Brettin T.S."/>
            <person name="Das A."/>
            <person name="Ljungdahl L.G."/>
            <person name="Ragsdale S.W."/>
        </authorList>
    </citation>
    <scope>NUCLEOTIDE SEQUENCE [LARGE SCALE GENOMIC DNA]</scope>
    <source>
        <strain>ATCC 39073 / JCM 9320</strain>
    </source>
</reference>
<sequence length="318" mass="33902">MQWVEVEVLTTAEAVEAVAVILEDYGATGVVIEDSADLTRKWEDRYGEIYALDPANYPASGVRVRAYLPVVSWQEERAGEIQTRVKALAAVGLDPGAATVRYRLAREEEWAYGWQKYYHPVRVTKGLTIKPTWEEYTPSPGETVIEIDPGMAFGTGTHPTTILSLQALERVLKPGARVVDVGCGTGILALAAAKMGAGAVLALDLDPVAVAVARKNIARNGAADKVTVRNNDLLAGLEGPFDLVVANILAEVILKMIPDAGRVLPAGGTLIASGISRGKAGVVEDALLANGFAVEDTLTSGEWVTFIVRNLLPDPVEC</sequence>
<evidence type="ECO:0000255" key="1">
    <source>
        <dbReference type="HAMAP-Rule" id="MF_00735"/>
    </source>
</evidence>
<feature type="chain" id="PRO_1000046048" description="Ribosomal protein L11 methyltransferase">
    <location>
        <begin position="1"/>
        <end position="318"/>
    </location>
</feature>
<feature type="binding site" evidence="1">
    <location>
        <position position="161"/>
    </location>
    <ligand>
        <name>S-adenosyl-L-methionine</name>
        <dbReference type="ChEBI" id="CHEBI:59789"/>
    </ligand>
</feature>
<feature type="binding site" evidence="1">
    <location>
        <position position="182"/>
    </location>
    <ligand>
        <name>S-adenosyl-L-methionine</name>
        <dbReference type="ChEBI" id="CHEBI:59789"/>
    </ligand>
</feature>
<feature type="binding site" evidence="1">
    <location>
        <position position="204"/>
    </location>
    <ligand>
        <name>S-adenosyl-L-methionine</name>
        <dbReference type="ChEBI" id="CHEBI:59789"/>
    </ligand>
</feature>
<feature type="binding site" evidence="1">
    <location>
        <position position="247"/>
    </location>
    <ligand>
        <name>S-adenosyl-L-methionine</name>
        <dbReference type="ChEBI" id="CHEBI:59789"/>
    </ligand>
</feature>
<accession>Q2RKY6</accession>
<gene>
    <name evidence="1" type="primary">prmA</name>
    <name type="ordered locus">Moth_0573</name>
</gene>
<organism>
    <name type="scientific">Moorella thermoacetica (strain ATCC 39073 / JCM 9320)</name>
    <dbReference type="NCBI Taxonomy" id="264732"/>
    <lineage>
        <taxon>Bacteria</taxon>
        <taxon>Bacillati</taxon>
        <taxon>Bacillota</taxon>
        <taxon>Clostridia</taxon>
        <taxon>Moorellales</taxon>
        <taxon>Moorellaceae</taxon>
        <taxon>Moorella</taxon>
    </lineage>
</organism>